<accession>Q0ZJ13</accession>
<proteinExistence type="inferred from homology"/>
<dbReference type="EC" id="7.1.2.2" evidence="1"/>
<dbReference type="EMBL" id="DQ424856">
    <property type="protein sequence ID" value="ABE47541.1"/>
    <property type="molecule type" value="Genomic_DNA"/>
</dbReference>
<dbReference type="RefSeq" id="YP_567083.1">
    <property type="nucleotide sequence ID" value="NC_007957.1"/>
</dbReference>
<dbReference type="SMR" id="Q0ZJ13"/>
<dbReference type="FunCoup" id="Q0ZJ13">
    <property type="interactions" value="316"/>
</dbReference>
<dbReference type="STRING" id="29760.Q0ZJ13"/>
<dbReference type="PaxDb" id="29760-VIT_00s0332g00060.t01"/>
<dbReference type="GeneID" id="4025008"/>
<dbReference type="KEGG" id="vvi:4025008"/>
<dbReference type="eggNOG" id="KOG1350">
    <property type="taxonomic scope" value="Eukaryota"/>
</dbReference>
<dbReference type="InParanoid" id="Q0ZJ13"/>
<dbReference type="OrthoDB" id="928021at71240"/>
<dbReference type="Proteomes" id="UP000009183">
    <property type="component" value="Chloroplast"/>
</dbReference>
<dbReference type="ExpressionAtlas" id="Q0ZJ13">
    <property type="expression patterns" value="baseline and differential"/>
</dbReference>
<dbReference type="GO" id="GO:0009535">
    <property type="term" value="C:chloroplast thylakoid membrane"/>
    <property type="evidence" value="ECO:0007669"/>
    <property type="project" value="UniProtKB-SubCell"/>
</dbReference>
<dbReference type="GO" id="GO:0005739">
    <property type="term" value="C:mitochondrion"/>
    <property type="evidence" value="ECO:0007669"/>
    <property type="project" value="GOC"/>
</dbReference>
<dbReference type="GO" id="GO:0045259">
    <property type="term" value="C:proton-transporting ATP synthase complex"/>
    <property type="evidence" value="ECO:0007669"/>
    <property type="project" value="UniProtKB-KW"/>
</dbReference>
<dbReference type="GO" id="GO:0005524">
    <property type="term" value="F:ATP binding"/>
    <property type="evidence" value="ECO:0007669"/>
    <property type="project" value="UniProtKB-UniRule"/>
</dbReference>
<dbReference type="GO" id="GO:0016887">
    <property type="term" value="F:ATP hydrolysis activity"/>
    <property type="evidence" value="ECO:0007669"/>
    <property type="project" value="InterPro"/>
</dbReference>
<dbReference type="GO" id="GO:0046933">
    <property type="term" value="F:proton-transporting ATP synthase activity, rotational mechanism"/>
    <property type="evidence" value="ECO:0007669"/>
    <property type="project" value="UniProtKB-UniRule"/>
</dbReference>
<dbReference type="GO" id="GO:0042776">
    <property type="term" value="P:proton motive force-driven mitochondrial ATP synthesis"/>
    <property type="evidence" value="ECO:0000318"/>
    <property type="project" value="GO_Central"/>
</dbReference>
<dbReference type="CDD" id="cd18110">
    <property type="entry name" value="ATP-synt_F1_beta_C"/>
    <property type="match status" value="1"/>
</dbReference>
<dbReference type="CDD" id="cd18115">
    <property type="entry name" value="ATP-synt_F1_beta_N"/>
    <property type="match status" value="1"/>
</dbReference>
<dbReference type="CDD" id="cd01133">
    <property type="entry name" value="F1-ATPase_beta_CD"/>
    <property type="match status" value="1"/>
</dbReference>
<dbReference type="FunFam" id="1.10.1140.10:FF:000001">
    <property type="entry name" value="ATP synthase subunit beta"/>
    <property type="match status" value="1"/>
</dbReference>
<dbReference type="FunFam" id="3.40.50.12240:FF:000006">
    <property type="entry name" value="ATP synthase subunit beta"/>
    <property type="match status" value="1"/>
</dbReference>
<dbReference type="FunFam" id="3.40.50.300:FF:000004">
    <property type="entry name" value="ATP synthase subunit beta"/>
    <property type="match status" value="1"/>
</dbReference>
<dbReference type="FunFam" id="2.40.10.170:FF:000002">
    <property type="entry name" value="ATP synthase subunit beta, chloroplastic"/>
    <property type="match status" value="1"/>
</dbReference>
<dbReference type="Gene3D" id="2.40.10.170">
    <property type="match status" value="1"/>
</dbReference>
<dbReference type="Gene3D" id="1.10.1140.10">
    <property type="entry name" value="Bovine Mitochondrial F1-atpase, Atp Synthase Beta Chain, Chain D, domain 3"/>
    <property type="match status" value="1"/>
</dbReference>
<dbReference type="Gene3D" id="3.40.50.300">
    <property type="entry name" value="P-loop containing nucleotide triphosphate hydrolases"/>
    <property type="match status" value="1"/>
</dbReference>
<dbReference type="HAMAP" id="MF_01347">
    <property type="entry name" value="ATP_synth_beta_bact"/>
    <property type="match status" value="1"/>
</dbReference>
<dbReference type="InterPro" id="IPR003593">
    <property type="entry name" value="AAA+_ATPase"/>
</dbReference>
<dbReference type="InterPro" id="IPR055190">
    <property type="entry name" value="ATP-synt_VA_C"/>
</dbReference>
<dbReference type="InterPro" id="IPR005722">
    <property type="entry name" value="ATP_synth_F1_bsu"/>
</dbReference>
<dbReference type="InterPro" id="IPR020003">
    <property type="entry name" value="ATPase_a/bsu_AS"/>
</dbReference>
<dbReference type="InterPro" id="IPR050053">
    <property type="entry name" value="ATPase_alpha/beta_chains"/>
</dbReference>
<dbReference type="InterPro" id="IPR004100">
    <property type="entry name" value="ATPase_F1/V1/A1_a/bsu_N"/>
</dbReference>
<dbReference type="InterPro" id="IPR036121">
    <property type="entry name" value="ATPase_F1/V1/A1_a/bsu_N_sf"/>
</dbReference>
<dbReference type="InterPro" id="IPR000194">
    <property type="entry name" value="ATPase_F1/V1/A1_a/bsu_nucl-bd"/>
</dbReference>
<dbReference type="InterPro" id="IPR024034">
    <property type="entry name" value="ATPase_F1/V1_b/a_C"/>
</dbReference>
<dbReference type="InterPro" id="IPR027417">
    <property type="entry name" value="P-loop_NTPase"/>
</dbReference>
<dbReference type="NCBIfam" id="TIGR01039">
    <property type="entry name" value="atpD"/>
    <property type="match status" value="1"/>
</dbReference>
<dbReference type="PANTHER" id="PTHR15184">
    <property type="entry name" value="ATP SYNTHASE"/>
    <property type="match status" value="1"/>
</dbReference>
<dbReference type="PANTHER" id="PTHR15184:SF71">
    <property type="entry name" value="ATP SYNTHASE SUBUNIT BETA, MITOCHONDRIAL"/>
    <property type="match status" value="1"/>
</dbReference>
<dbReference type="Pfam" id="PF00006">
    <property type="entry name" value="ATP-synt_ab"/>
    <property type="match status" value="1"/>
</dbReference>
<dbReference type="Pfam" id="PF02874">
    <property type="entry name" value="ATP-synt_ab_N"/>
    <property type="match status" value="1"/>
</dbReference>
<dbReference type="Pfam" id="PF22919">
    <property type="entry name" value="ATP-synt_VA_C"/>
    <property type="match status" value="1"/>
</dbReference>
<dbReference type="SMART" id="SM00382">
    <property type="entry name" value="AAA"/>
    <property type="match status" value="1"/>
</dbReference>
<dbReference type="SUPFAM" id="SSF47917">
    <property type="entry name" value="C-terminal domain of alpha and beta subunits of F1 ATP synthase"/>
    <property type="match status" value="1"/>
</dbReference>
<dbReference type="SUPFAM" id="SSF50615">
    <property type="entry name" value="N-terminal domain of alpha and beta subunits of F1 ATP synthase"/>
    <property type="match status" value="1"/>
</dbReference>
<dbReference type="SUPFAM" id="SSF52540">
    <property type="entry name" value="P-loop containing nucleoside triphosphate hydrolases"/>
    <property type="match status" value="1"/>
</dbReference>
<dbReference type="PROSITE" id="PS00152">
    <property type="entry name" value="ATPASE_ALPHA_BETA"/>
    <property type="match status" value="1"/>
</dbReference>
<gene>
    <name evidence="1" type="primary">atpB</name>
</gene>
<sequence length="498" mass="53743">MRINPTTSGPGVSTLEKKNLGRIAQIIGPVLDVAFPPGKMPNIYNALVVKGRDTVGQQINVTCEVQQLLGNNRVRAVAMSATDGLMRGMEVIDTGAPLSVPVGGATLGRIFNVLGEPVDNLGPVDTRTTSPIHRSAPAFIQLDTKLSIFETGIKVVDLLAPYRRGGKIGLFGGAGVGKTVLIMELINNIAKAHGGVSVFGGVGERTREGNDLYMEMKESGVINEKNISESKVALVYGQMNEPPGARMRVGLTALTMAEYFRDVNEQDVLLFIDNIFRFVQAGSEVSALLGRMPSAVGYQPTLSTEMGTLQERITSTKEGSITSIQAVYVPADDLTDPAPATTFAHLDATTVLSRGLAAKGIYPAVDPLDSTSTMLQPRIVGEEHYETAQRVKQTLQRYKELQDIIAILGLDELSEEDRLTVARARKIERFLSQPFFVAEVFTGSPGKYVGLAETIRGFQLILSGELDGLPEQAFYLVGNIDEATAKAMNLEMESKLKK</sequence>
<feature type="chain" id="PRO_0000254531" description="ATP synthase subunit beta, chloroplastic">
    <location>
        <begin position="1"/>
        <end position="498"/>
    </location>
</feature>
<feature type="binding site" evidence="1">
    <location>
        <begin position="172"/>
        <end position="179"/>
    </location>
    <ligand>
        <name>ATP</name>
        <dbReference type="ChEBI" id="CHEBI:30616"/>
    </ligand>
</feature>
<name>ATPB_VITVI</name>
<organism>
    <name type="scientific">Vitis vinifera</name>
    <name type="common">Grape</name>
    <dbReference type="NCBI Taxonomy" id="29760"/>
    <lineage>
        <taxon>Eukaryota</taxon>
        <taxon>Viridiplantae</taxon>
        <taxon>Streptophyta</taxon>
        <taxon>Embryophyta</taxon>
        <taxon>Tracheophyta</taxon>
        <taxon>Spermatophyta</taxon>
        <taxon>Magnoliopsida</taxon>
        <taxon>eudicotyledons</taxon>
        <taxon>Gunneridae</taxon>
        <taxon>Pentapetalae</taxon>
        <taxon>rosids</taxon>
        <taxon>Vitales</taxon>
        <taxon>Vitaceae</taxon>
        <taxon>Viteae</taxon>
        <taxon>Vitis</taxon>
    </lineage>
</organism>
<keyword id="KW-0066">ATP synthesis</keyword>
<keyword id="KW-0067">ATP-binding</keyword>
<keyword id="KW-0139">CF(1)</keyword>
<keyword id="KW-0150">Chloroplast</keyword>
<keyword id="KW-0375">Hydrogen ion transport</keyword>
<keyword id="KW-0406">Ion transport</keyword>
<keyword id="KW-0472">Membrane</keyword>
<keyword id="KW-0547">Nucleotide-binding</keyword>
<keyword id="KW-0934">Plastid</keyword>
<keyword id="KW-1185">Reference proteome</keyword>
<keyword id="KW-0793">Thylakoid</keyword>
<keyword id="KW-1278">Translocase</keyword>
<keyword id="KW-0813">Transport</keyword>
<evidence type="ECO:0000255" key="1">
    <source>
        <dbReference type="HAMAP-Rule" id="MF_01347"/>
    </source>
</evidence>
<protein>
    <recommendedName>
        <fullName evidence="1">ATP synthase subunit beta, chloroplastic</fullName>
        <ecNumber evidence="1">7.1.2.2</ecNumber>
    </recommendedName>
    <alternativeName>
        <fullName evidence="1">ATP synthase F1 sector subunit beta</fullName>
    </alternativeName>
    <alternativeName>
        <fullName evidence="1">F-ATPase subunit beta</fullName>
    </alternativeName>
</protein>
<geneLocation type="chloroplast"/>
<comment type="function">
    <text evidence="1">Produces ATP from ADP in the presence of a proton gradient across the membrane. The catalytic sites are hosted primarily by the beta subunits.</text>
</comment>
<comment type="catalytic activity">
    <reaction evidence="1">
        <text>ATP + H2O + 4 H(+)(in) = ADP + phosphate + 5 H(+)(out)</text>
        <dbReference type="Rhea" id="RHEA:57720"/>
        <dbReference type="ChEBI" id="CHEBI:15377"/>
        <dbReference type="ChEBI" id="CHEBI:15378"/>
        <dbReference type="ChEBI" id="CHEBI:30616"/>
        <dbReference type="ChEBI" id="CHEBI:43474"/>
        <dbReference type="ChEBI" id="CHEBI:456216"/>
        <dbReference type="EC" id="7.1.2.2"/>
    </reaction>
</comment>
<comment type="subunit">
    <text evidence="1">F-type ATPases have 2 components, CF(1) - the catalytic core - and CF(0) - the membrane proton channel. CF(1) has five subunits: alpha(3), beta(3), gamma(1), delta(1), epsilon(1). CF(0) has four main subunits: a(1), b(1), b'(1) and c(9-12).</text>
</comment>
<comment type="subcellular location">
    <subcellularLocation>
        <location evidence="1">Plastid</location>
        <location evidence="1">Chloroplast thylakoid membrane</location>
        <topology evidence="1">Peripheral membrane protein</topology>
    </subcellularLocation>
</comment>
<comment type="similarity">
    <text evidence="1">Belongs to the ATPase alpha/beta chains family.</text>
</comment>
<reference key="1">
    <citation type="journal article" date="2006" name="BMC Evol. Biol.">
        <title>Phylogenetic analyses of Vitis (Vitaceae) based on complete chloroplast genome sequences: effects of taxon sampling and phylogenetic methods on resolving relationships among rosids.</title>
        <authorList>
            <person name="Jansen R.K."/>
            <person name="Kaittanis C."/>
            <person name="Lee S.-B."/>
            <person name="Saski C."/>
            <person name="Tomkins J."/>
            <person name="Alverson A.J."/>
            <person name="Daniell H."/>
        </authorList>
    </citation>
    <scope>NUCLEOTIDE SEQUENCE [LARGE SCALE GENOMIC DNA]</scope>
    <source>
        <strain>cv. Maxxa</strain>
    </source>
</reference>